<sequence>PTSVAVDQGSMVSNSPGEWCWPGMGYPVYPFPRCRALVKSQCAGGQVVESIQKDCCRQIAAIGDEWCICGALGSMRGSMYKELGVALADDKATVAEVFPGCRTEVMDRAVASLPAVCNQYIPNTNGTDGVCYWLSYYQPPRQMSSR</sequence>
<evidence type="ECO:0000255" key="1"/>
<evidence type="ECO:0000269" key="2">
    <source>
    </source>
</evidence>
<evidence type="ECO:0000305" key="3"/>
<comment type="function">
    <text>Could be involved in insect defense mechanisms. Inhibits insect-type alpha-amylase.</text>
</comment>
<comment type="subunit">
    <text>Monomer.</text>
</comment>
<comment type="subcellular location">
    <subcellularLocation>
        <location>Secreted</location>
    </subcellularLocation>
</comment>
<comment type="tissue specificity">
    <text>Endosperm.</text>
</comment>
<comment type="PTM">
    <text evidence="3">Five disulfide bonds, which are essential for the inhibitor activity, are probably present.</text>
</comment>
<comment type="PTM">
    <text>Glycosylated.</text>
</comment>
<comment type="allergen">
    <text>Causes an allergic reaction in human. Involved in baker's asthma.</text>
</comment>
<comment type="similarity">
    <text evidence="3">Belongs to the protease inhibitor I6 (cereal trypsin/alpha-amylase inhibitor) family.</text>
</comment>
<organism>
    <name type="scientific">Hordeum vulgare</name>
    <name type="common">Barley</name>
    <dbReference type="NCBI Taxonomy" id="4513"/>
    <lineage>
        <taxon>Eukaryota</taxon>
        <taxon>Viridiplantae</taxon>
        <taxon>Streptophyta</taxon>
        <taxon>Embryophyta</taxon>
        <taxon>Tracheophyta</taxon>
        <taxon>Spermatophyta</taxon>
        <taxon>Magnoliopsida</taxon>
        <taxon>Liliopsida</taxon>
        <taxon>Poales</taxon>
        <taxon>Poaceae</taxon>
        <taxon>BOP clade</taxon>
        <taxon>Pooideae</taxon>
        <taxon>Triticodae</taxon>
        <taxon>Triticeae</taxon>
        <taxon>Hordeinae</taxon>
        <taxon>Hordeum</taxon>
    </lineage>
</organism>
<proteinExistence type="evidence at protein level"/>
<reference key="1">
    <citation type="journal article" date="1992" name="Plant Mol. Biol.">
        <title>A major barley allergen associated with baker's asthma disease is a glycosylated monomeric inhibitor of insect alpha-amylase: cDNA cloning and chromosomal location of the gene.</title>
        <authorList>
            <person name="Mena M."/>
            <person name="Sanchez-Monge R."/>
            <person name="Gomez L."/>
            <person name="Salcedo G."/>
            <person name="Carbonero P."/>
        </authorList>
    </citation>
    <scope>NUCLEOTIDE SEQUENCE [MRNA]</scope>
    <source>
        <strain>cv. Abyssinian 2231</strain>
        <tissue>Endosperm</tissue>
    </source>
</reference>
<reference key="2">
    <citation type="journal article" date="1989" name="FEBS Lett.">
        <title>A barley flour inhibitor of insect alpha-amylase is a major allergen associated with baker's asthma disease.</title>
        <authorList>
            <person name="Barber D."/>
            <person name="Sanchez-Monge R."/>
            <person name="Gomez L."/>
            <person name="Carpizo J."/>
            <person name="Armentia A."/>
            <person name="Lopez-Otin C."/>
            <person name="Juan F."/>
            <person name="Salcedo G."/>
        </authorList>
    </citation>
    <scope>PROTEIN SEQUENCE OF 15-34</scope>
    <source>
        <strain>cv. Bomi</strain>
    </source>
</reference>
<name>IAA1_HORVU</name>
<gene>
    <name type="primary">IAM1</name>
</gene>
<protein>
    <recommendedName>
        <fullName>Alpha-amylase inhibitor BMAI-1</fullName>
    </recommendedName>
    <alternativeName>
        <fullName>Alpha-amylase flour inhibitor</fullName>
    </alternativeName>
    <allergenName>Hor v 1</allergenName>
</protein>
<dbReference type="EMBL" id="X63517">
    <property type="protein sequence ID" value="CAA45085.1"/>
    <property type="molecule type" value="mRNA"/>
</dbReference>
<dbReference type="PIR" id="S26197">
    <property type="entry name" value="S26197"/>
</dbReference>
<dbReference type="SMR" id="P16968"/>
<dbReference type="Allergome" id="3328">
    <property type="allergen name" value="Hor v 15.0101"/>
</dbReference>
<dbReference type="Allergome" id="418">
    <property type="allergen name" value="Hor v 15"/>
</dbReference>
<dbReference type="GlyCosmos" id="P16968">
    <property type="glycosylation" value="1 site, No reported glycans"/>
</dbReference>
<dbReference type="ExpressionAtlas" id="P16968">
    <property type="expression patterns" value="baseline and differential"/>
</dbReference>
<dbReference type="GO" id="GO:0005576">
    <property type="term" value="C:extracellular region"/>
    <property type="evidence" value="ECO:0007669"/>
    <property type="project" value="UniProtKB-SubCell"/>
</dbReference>
<dbReference type="GO" id="GO:0015066">
    <property type="term" value="F:alpha-amylase inhibitor activity"/>
    <property type="evidence" value="ECO:0000314"/>
    <property type="project" value="CACAO"/>
</dbReference>
<dbReference type="GO" id="GO:0004867">
    <property type="term" value="F:serine-type endopeptidase inhibitor activity"/>
    <property type="evidence" value="ECO:0007669"/>
    <property type="project" value="InterPro"/>
</dbReference>
<dbReference type="CDD" id="cd00261">
    <property type="entry name" value="AAI_SS"/>
    <property type="match status" value="1"/>
</dbReference>
<dbReference type="FunFam" id="1.10.110.10:FF:000004">
    <property type="entry name" value="Alpha-amylase inhibitor 0.19"/>
    <property type="match status" value="1"/>
</dbReference>
<dbReference type="Gene3D" id="1.10.110.10">
    <property type="entry name" value="Plant lipid-transfer and hydrophobic proteins"/>
    <property type="match status" value="1"/>
</dbReference>
<dbReference type="InterPro" id="IPR002411">
    <property type="entry name" value="Allergen/amylase_inhib_rice"/>
</dbReference>
<dbReference type="InterPro" id="IPR006106">
    <property type="entry name" value="Allergen/soft/tryp_amyl_inhib"/>
</dbReference>
<dbReference type="InterPro" id="IPR006105">
    <property type="entry name" value="Allergen/tryp_amyl_inhib_CS"/>
</dbReference>
<dbReference type="InterPro" id="IPR036312">
    <property type="entry name" value="Bifun_inhib/LTP/seed_sf"/>
</dbReference>
<dbReference type="InterPro" id="IPR016140">
    <property type="entry name" value="Bifunc_inhib/LTP/seed_store"/>
</dbReference>
<dbReference type="PANTHER" id="PTHR34481:SF8">
    <property type="entry name" value="SEED ALLERGENIC PROTEIN RAG1"/>
    <property type="match status" value="1"/>
</dbReference>
<dbReference type="PANTHER" id="PTHR34481">
    <property type="entry name" value="TRYPSIN/FACTOR XIIA INHIBITOR-RELATED"/>
    <property type="match status" value="1"/>
</dbReference>
<dbReference type="Pfam" id="PF00234">
    <property type="entry name" value="Tryp_alpha_amyl"/>
    <property type="match status" value="1"/>
</dbReference>
<dbReference type="PIRSF" id="PIRSF001657">
    <property type="entry name" value="Allergen/amylase_inhib"/>
    <property type="match status" value="1"/>
</dbReference>
<dbReference type="PRINTS" id="PR00808">
    <property type="entry name" value="AMLASEINHBTR"/>
</dbReference>
<dbReference type="PRINTS" id="PR00809">
    <property type="entry name" value="RAGALLERGEN"/>
</dbReference>
<dbReference type="SMART" id="SM00499">
    <property type="entry name" value="AAI"/>
    <property type="match status" value="1"/>
</dbReference>
<dbReference type="SUPFAM" id="SSF47699">
    <property type="entry name" value="Bifunctional inhibitor/lipid-transfer protein/seed storage 2S albumin"/>
    <property type="match status" value="1"/>
</dbReference>
<dbReference type="PROSITE" id="PS00426">
    <property type="entry name" value="CEREAL_TRYP_AMYL_INH"/>
    <property type="match status" value="1"/>
</dbReference>
<keyword id="KW-0020">Allergen</keyword>
<keyword id="KW-0022">Alpha-amylase inhibitor</keyword>
<keyword id="KW-0903">Direct protein sequencing</keyword>
<keyword id="KW-1015">Disulfide bond</keyword>
<keyword id="KW-0325">Glycoprotein</keyword>
<keyword id="KW-0964">Secreted</keyword>
<keyword id="KW-0732">Signal</keyword>
<feature type="signal peptide" evidence="2">
    <location>
        <begin position="1" status="less than"/>
        <end position="14"/>
    </location>
</feature>
<feature type="chain" id="PRO_0000014355" description="Alpha-amylase inhibitor BMAI-1">
    <location>
        <begin position="15"/>
        <end position="146"/>
    </location>
</feature>
<feature type="glycosylation site" description="N-linked (GlcNAc...) asparagine" evidence="1">
    <location>
        <position position="125"/>
    </location>
</feature>
<feature type="non-terminal residue">
    <location>
        <position position="1"/>
    </location>
</feature>
<accession>P16968</accession>
<accession>Q43483</accession>